<proteinExistence type="inferred from homology"/>
<accession>A6MM68</accession>
<feature type="chain" id="PRO_0000323664" description="DNA-directed RNA polymerase subunit alpha">
    <location>
        <begin position="1"/>
        <end position="337"/>
    </location>
</feature>
<feature type="region of interest" description="Alpha N-terminal domain (alpha-NTD)" evidence="1">
    <location>
        <begin position="1"/>
        <end position="232"/>
    </location>
</feature>
<feature type="region of interest" description="Alpha C-terminal domain (alpha-CTD)" evidence="1">
    <location>
        <begin position="266"/>
        <end position="337"/>
    </location>
</feature>
<organism>
    <name type="scientific">Buxus microphylla</name>
    <name type="common">Littleleaf boxwood</name>
    <name type="synonym">Japanese boxwood</name>
    <dbReference type="NCBI Taxonomy" id="153571"/>
    <lineage>
        <taxon>Eukaryota</taxon>
        <taxon>Viridiplantae</taxon>
        <taxon>Streptophyta</taxon>
        <taxon>Embryophyta</taxon>
        <taxon>Tracheophyta</taxon>
        <taxon>Spermatophyta</taxon>
        <taxon>Magnoliopsida</taxon>
        <taxon>Buxales</taxon>
        <taxon>Buxaceae</taxon>
        <taxon>Buxus</taxon>
    </lineage>
</organism>
<gene>
    <name evidence="1" type="primary">rpoA</name>
</gene>
<geneLocation type="chloroplast"/>
<dbReference type="EC" id="2.7.7.6" evidence="1"/>
<dbReference type="EMBL" id="EF380351">
    <property type="protein sequence ID" value="ABQ45280.1"/>
    <property type="molecule type" value="Genomic_DNA"/>
</dbReference>
<dbReference type="RefSeq" id="YP_001294216.1">
    <property type="nucleotide sequence ID" value="NC_009599.1"/>
</dbReference>
<dbReference type="SMR" id="A6MM68"/>
<dbReference type="GeneID" id="5236921"/>
<dbReference type="GO" id="GO:0009507">
    <property type="term" value="C:chloroplast"/>
    <property type="evidence" value="ECO:0007669"/>
    <property type="project" value="UniProtKB-SubCell"/>
</dbReference>
<dbReference type="GO" id="GO:0000428">
    <property type="term" value="C:DNA-directed RNA polymerase complex"/>
    <property type="evidence" value="ECO:0007669"/>
    <property type="project" value="UniProtKB-KW"/>
</dbReference>
<dbReference type="GO" id="GO:0005739">
    <property type="term" value="C:mitochondrion"/>
    <property type="evidence" value="ECO:0007669"/>
    <property type="project" value="GOC"/>
</dbReference>
<dbReference type="GO" id="GO:0003677">
    <property type="term" value="F:DNA binding"/>
    <property type="evidence" value="ECO:0007669"/>
    <property type="project" value="UniProtKB-UniRule"/>
</dbReference>
<dbReference type="GO" id="GO:0003899">
    <property type="term" value="F:DNA-directed RNA polymerase activity"/>
    <property type="evidence" value="ECO:0007669"/>
    <property type="project" value="UniProtKB-UniRule"/>
</dbReference>
<dbReference type="GO" id="GO:0046983">
    <property type="term" value="F:protein dimerization activity"/>
    <property type="evidence" value="ECO:0007669"/>
    <property type="project" value="InterPro"/>
</dbReference>
<dbReference type="GO" id="GO:0006351">
    <property type="term" value="P:DNA-templated transcription"/>
    <property type="evidence" value="ECO:0007669"/>
    <property type="project" value="UniProtKB-UniRule"/>
</dbReference>
<dbReference type="CDD" id="cd06928">
    <property type="entry name" value="RNAP_alpha_NTD"/>
    <property type="match status" value="1"/>
</dbReference>
<dbReference type="FunFam" id="1.10.150.20:FF:000021">
    <property type="entry name" value="DNA-directed RNA polymerase subunit alpha"/>
    <property type="match status" value="1"/>
</dbReference>
<dbReference type="FunFam" id="2.170.120.12:FF:000001">
    <property type="entry name" value="DNA-directed RNA polymerase subunit alpha"/>
    <property type="match status" value="1"/>
</dbReference>
<dbReference type="FunFam" id="3.30.1360.10:FF:000039">
    <property type="entry name" value="DNA-directed RNA polymerase subunit alpha"/>
    <property type="match status" value="1"/>
</dbReference>
<dbReference type="Gene3D" id="1.10.150.20">
    <property type="entry name" value="5' to 3' exonuclease, C-terminal subdomain"/>
    <property type="match status" value="1"/>
</dbReference>
<dbReference type="Gene3D" id="2.170.120.12">
    <property type="entry name" value="DNA-directed RNA polymerase, insert domain"/>
    <property type="match status" value="1"/>
</dbReference>
<dbReference type="Gene3D" id="3.30.1360.10">
    <property type="entry name" value="RNA polymerase, RBP11-like subunit"/>
    <property type="match status" value="1"/>
</dbReference>
<dbReference type="HAMAP" id="MF_00059">
    <property type="entry name" value="RNApol_bact_RpoA"/>
    <property type="match status" value="1"/>
</dbReference>
<dbReference type="InterPro" id="IPR011262">
    <property type="entry name" value="DNA-dir_RNA_pol_insert"/>
</dbReference>
<dbReference type="InterPro" id="IPR011263">
    <property type="entry name" value="DNA-dir_RNA_pol_RpoA/D/Rpb3"/>
</dbReference>
<dbReference type="InterPro" id="IPR011773">
    <property type="entry name" value="DNA-dir_RpoA"/>
</dbReference>
<dbReference type="InterPro" id="IPR036603">
    <property type="entry name" value="RBP11-like"/>
</dbReference>
<dbReference type="InterPro" id="IPR011260">
    <property type="entry name" value="RNAP_asu_C"/>
</dbReference>
<dbReference type="InterPro" id="IPR036643">
    <property type="entry name" value="RNApol_insert_sf"/>
</dbReference>
<dbReference type="NCBIfam" id="TIGR02027">
    <property type="entry name" value="rpoA"/>
    <property type="match status" value="1"/>
</dbReference>
<dbReference type="Pfam" id="PF01000">
    <property type="entry name" value="RNA_pol_A_bac"/>
    <property type="match status" value="1"/>
</dbReference>
<dbReference type="Pfam" id="PF03118">
    <property type="entry name" value="RNA_pol_A_CTD"/>
    <property type="match status" value="1"/>
</dbReference>
<dbReference type="Pfam" id="PF01193">
    <property type="entry name" value="RNA_pol_L"/>
    <property type="match status" value="1"/>
</dbReference>
<dbReference type="SMART" id="SM00662">
    <property type="entry name" value="RPOLD"/>
    <property type="match status" value="1"/>
</dbReference>
<dbReference type="SUPFAM" id="SSF47789">
    <property type="entry name" value="C-terminal domain of RNA polymerase alpha subunit"/>
    <property type="match status" value="1"/>
</dbReference>
<dbReference type="SUPFAM" id="SSF56553">
    <property type="entry name" value="Insert subdomain of RNA polymerase alpha subunit"/>
    <property type="match status" value="1"/>
</dbReference>
<dbReference type="SUPFAM" id="SSF55257">
    <property type="entry name" value="RBP11-like subunits of RNA polymerase"/>
    <property type="match status" value="1"/>
</dbReference>
<keyword id="KW-0150">Chloroplast</keyword>
<keyword id="KW-0240">DNA-directed RNA polymerase</keyword>
<keyword id="KW-0548">Nucleotidyltransferase</keyword>
<keyword id="KW-0934">Plastid</keyword>
<keyword id="KW-0804">Transcription</keyword>
<keyword id="KW-0808">Transferase</keyword>
<protein>
    <recommendedName>
        <fullName evidence="1">DNA-directed RNA polymerase subunit alpha</fullName>
        <shortName evidence="1">PEP</shortName>
        <ecNumber evidence="1">2.7.7.6</ecNumber>
    </recommendedName>
    <alternativeName>
        <fullName evidence="1">Plastid-encoded RNA polymerase subunit alpha</fullName>
        <shortName evidence="1">RNA polymerase subunit alpha</shortName>
    </alternativeName>
</protein>
<sequence>MVREEVRVCTRTLQWKCVESRADNKRLYYGRFILSPLMKGQADTIGIAMRRALLGEIEGTCITCAKSEKIPHEYSNIVGIEESVHEILMNLKEIVLRSNLYGTRDASICVRGPRHVTAQDIISPPSVEIIDTTQHIASLTEPIDLCIGLQIERNRGYNMKTPKNSQDGRYPIDAVFMPVRNANHSIHSYGNGNEKQEILFLEIWTNGSLTPKEALHEASRNLIDLFIPFLHANEENFILKDNQNKVALPLFTFHDRLAKQRKNKKEISFQCIFIDQSELPPRTYNCLKRSNIHTLLDLLNNSQEDLMKIEHFRIEDVKQILGILQKHFAIDLPKNKF</sequence>
<comment type="function">
    <text evidence="1">DNA-dependent RNA polymerase catalyzes the transcription of DNA into RNA using the four ribonucleoside triphosphates as substrates.</text>
</comment>
<comment type="catalytic activity">
    <reaction evidence="1">
        <text>RNA(n) + a ribonucleoside 5'-triphosphate = RNA(n+1) + diphosphate</text>
        <dbReference type="Rhea" id="RHEA:21248"/>
        <dbReference type="Rhea" id="RHEA-COMP:14527"/>
        <dbReference type="Rhea" id="RHEA-COMP:17342"/>
        <dbReference type="ChEBI" id="CHEBI:33019"/>
        <dbReference type="ChEBI" id="CHEBI:61557"/>
        <dbReference type="ChEBI" id="CHEBI:140395"/>
        <dbReference type="EC" id="2.7.7.6"/>
    </reaction>
</comment>
<comment type="subunit">
    <text evidence="1">In plastids the minimal PEP RNA polymerase catalytic core is composed of four subunits: alpha, beta, beta', and beta''. When a (nuclear-encoded) sigma factor is associated with the core the holoenzyme is formed, which can initiate transcription.</text>
</comment>
<comment type="subcellular location">
    <subcellularLocation>
        <location>Plastid</location>
        <location>Chloroplast</location>
    </subcellularLocation>
</comment>
<comment type="domain">
    <text evidence="1">The N-terminal domain is essential for RNAP assembly and basal transcription, whereas the C-terminal domain is involved in interaction with transcriptional regulators and with upstream promoter elements.</text>
</comment>
<comment type="similarity">
    <text evidence="1">Belongs to the RNA polymerase alpha chain family.</text>
</comment>
<name>RPOA_BUXMI</name>
<reference key="1">
    <citation type="journal article" date="2007" name="Mol. Phylogenet. Evol.">
        <title>Phylogenetic and evolutionary implications of complete chloroplast genome sequences of four early-diverging angiosperms: Buxus (Buxaceae), Chloranthus (Chloranthaceae), Dioscorea (Dioscoreaceae), and Illicium (Schisandraceae).</title>
        <authorList>
            <person name="Hansen D.R."/>
            <person name="Dastidar S.G."/>
            <person name="Cai Z."/>
            <person name="Penaflor C."/>
            <person name="Kuehl J.V."/>
            <person name="Boore J.L."/>
            <person name="Jansen R.K."/>
        </authorList>
    </citation>
    <scope>NUCLEOTIDE SEQUENCE [LARGE SCALE GENOMIC DNA]</scope>
</reference>
<evidence type="ECO:0000255" key="1">
    <source>
        <dbReference type="HAMAP-Rule" id="MF_00059"/>
    </source>
</evidence>